<protein>
    <recommendedName>
        <fullName evidence="1">tRNA-2-methylthio-N(6)-dimethylallyladenosine synthase</fullName>
        <ecNumber evidence="1">2.8.4.3</ecNumber>
    </recommendedName>
    <alternativeName>
        <fullName evidence="1">(Dimethylallyl)adenosine tRNA methylthiotransferase MiaB</fullName>
    </alternativeName>
    <alternativeName>
        <fullName evidence="1">tRNA-i(6)A37 methylthiotransferase</fullName>
    </alternativeName>
</protein>
<dbReference type="EC" id="2.8.4.3" evidence="1"/>
<dbReference type="EMBL" id="CP000058">
    <property type="protein sequence ID" value="AAZ34838.1"/>
    <property type="molecule type" value="Genomic_DNA"/>
</dbReference>
<dbReference type="RefSeq" id="WP_005732197.1">
    <property type="nucleotide sequence ID" value="NC_005773.3"/>
</dbReference>
<dbReference type="SMR" id="Q48DN8"/>
<dbReference type="GeneID" id="69861401"/>
<dbReference type="KEGG" id="psp:PSPPH_4387"/>
<dbReference type="eggNOG" id="COG0621">
    <property type="taxonomic scope" value="Bacteria"/>
</dbReference>
<dbReference type="HOGENOM" id="CLU_018697_2_0_6"/>
<dbReference type="Proteomes" id="UP000000551">
    <property type="component" value="Chromosome"/>
</dbReference>
<dbReference type="GO" id="GO:0005829">
    <property type="term" value="C:cytosol"/>
    <property type="evidence" value="ECO:0007669"/>
    <property type="project" value="TreeGrafter"/>
</dbReference>
<dbReference type="GO" id="GO:0051539">
    <property type="term" value="F:4 iron, 4 sulfur cluster binding"/>
    <property type="evidence" value="ECO:0007669"/>
    <property type="project" value="UniProtKB-UniRule"/>
</dbReference>
<dbReference type="GO" id="GO:0046872">
    <property type="term" value="F:metal ion binding"/>
    <property type="evidence" value="ECO:0007669"/>
    <property type="project" value="UniProtKB-KW"/>
</dbReference>
<dbReference type="GO" id="GO:0035597">
    <property type="term" value="F:N6-isopentenyladenosine methylthiotransferase activity"/>
    <property type="evidence" value="ECO:0007669"/>
    <property type="project" value="TreeGrafter"/>
</dbReference>
<dbReference type="CDD" id="cd01335">
    <property type="entry name" value="Radical_SAM"/>
    <property type="match status" value="1"/>
</dbReference>
<dbReference type="FunFam" id="3.40.50.12160:FF:000001">
    <property type="entry name" value="tRNA-2-methylthio-N(6)-dimethylallyladenosine synthase"/>
    <property type="match status" value="1"/>
</dbReference>
<dbReference type="FunFam" id="3.80.30.20:FF:000001">
    <property type="entry name" value="tRNA-2-methylthio-N(6)-dimethylallyladenosine synthase 2"/>
    <property type="match status" value="1"/>
</dbReference>
<dbReference type="Gene3D" id="3.40.50.12160">
    <property type="entry name" value="Methylthiotransferase, N-terminal domain"/>
    <property type="match status" value="1"/>
</dbReference>
<dbReference type="Gene3D" id="3.80.30.20">
    <property type="entry name" value="tm_1862 like domain"/>
    <property type="match status" value="1"/>
</dbReference>
<dbReference type="HAMAP" id="MF_01864">
    <property type="entry name" value="tRNA_metthiotr_MiaB"/>
    <property type="match status" value="1"/>
</dbReference>
<dbReference type="InterPro" id="IPR006638">
    <property type="entry name" value="Elp3/MiaA/NifB-like_rSAM"/>
</dbReference>
<dbReference type="InterPro" id="IPR005839">
    <property type="entry name" value="Methylthiotransferase"/>
</dbReference>
<dbReference type="InterPro" id="IPR020612">
    <property type="entry name" value="Methylthiotransferase_CS"/>
</dbReference>
<dbReference type="InterPro" id="IPR013848">
    <property type="entry name" value="Methylthiotransferase_N"/>
</dbReference>
<dbReference type="InterPro" id="IPR038135">
    <property type="entry name" value="Methylthiotransferase_N_sf"/>
</dbReference>
<dbReference type="InterPro" id="IPR006463">
    <property type="entry name" value="MiaB_methiolase"/>
</dbReference>
<dbReference type="InterPro" id="IPR007197">
    <property type="entry name" value="rSAM"/>
</dbReference>
<dbReference type="InterPro" id="IPR023404">
    <property type="entry name" value="rSAM_horseshoe"/>
</dbReference>
<dbReference type="InterPro" id="IPR002792">
    <property type="entry name" value="TRAM_dom"/>
</dbReference>
<dbReference type="NCBIfam" id="TIGR01574">
    <property type="entry name" value="miaB-methiolase"/>
    <property type="match status" value="1"/>
</dbReference>
<dbReference type="NCBIfam" id="TIGR00089">
    <property type="entry name" value="MiaB/RimO family radical SAM methylthiotransferase"/>
    <property type="match status" value="1"/>
</dbReference>
<dbReference type="PANTHER" id="PTHR43020">
    <property type="entry name" value="CDK5 REGULATORY SUBUNIT-ASSOCIATED PROTEIN 1"/>
    <property type="match status" value="1"/>
</dbReference>
<dbReference type="PANTHER" id="PTHR43020:SF2">
    <property type="entry name" value="MITOCHONDRIAL TRNA METHYLTHIOTRANSFERASE CDK5RAP1"/>
    <property type="match status" value="1"/>
</dbReference>
<dbReference type="Pfam" id="PF04055">
    <property type="entry name" value="Radical_SAM"/>
    <property type="match status" value="1"/>
</dbReference>
<dbReference type="Pfam" id="PF01938">
    <property type="entry name" value="TRAM"/>
    <property type="match status" value="1"/>
</dbReference>
<dbReference type="Pfam" id="PF00919">
    <property type="entry name" value="UPF0004"/>
    <property type="match status" value="1"/>
</dbReference>
<dbReference type="SFLD" id="SFLDF00273">
    <property type="entry name" value="(dimethylallyl)adenosine_tRNA"/>
    <property type="match status" value="1"/>
</dbReference>
<dbReference type="SFLD" id="SFLDG01082">
    <property type="entry name" value="B12-binding_domain_containing"/>
    <property type="match status" value="1"/>
</dbReference>
<dbReference type="SFLD" id="SFLDG01061">
    <property type="entry name" value="methylthiotransferase"/>
    <property type="match status" value="1"/>
</dbReference>
<dbReference type="SMART" id="SM00729">
    <property type="entry name" value="Elp3"/>
    <property type="match status" value="1"/>
</dbReference>
<dbReference type="SUPFAM" id="SSF102114">
    <property type="entry name" value="Radical SAM enzymes"/>
    <property type="match status" value="1"/>
</dbReference>
<dbReference type="PROSITE" id="PS51449">
    <property type="entry name" value="MTTASE_N"/>
    <property type="match status" value="1"/>
</dbReference>
<dbReference type="PROSITE" id="PS01278">
    <property type="entry name" value="MTTASE_RADICAL"/>
    <property type="match status" value="1"/>
</dbReference>
<dbReference type="PROSITE" id="PS51918">
    <property type="entry name" value="RADICAL_SAM"/>
    <property type="match status" value="1"/>
</dbReference>
<dbReference type="PROSITE" id="PS50926">
    <property type="entry name" value="TRAM"/>
    <property type="match status" value="1"/>
</dbReference>
<name>MIAB_PSE14</name>
<keyword id="KW-0004">4Fe-4S</keyword>
<keyword id="KW-0963">Cytoplasm</keyword>
<keyword id="KW-0408">Iron</keyword>
<keyword id="KW-0411">Iron-sulfur</keyword>
<keyword id="KW-0479">Metal-binding</keyword>
<keyword id="KW-0949">S-adenosyl-L-methionine</keyword>
<keyword id="KW-0808">Transferase</keyword>
<keyword id="KW-0819">tRNA processing</keyword>
<comment type="function">
    <text evidence="1">Catalyzes the methylthiolation of N6-(dimethylallyl)adenosine (i(6)A), leading to the formation of 2-methylthio-N6-(dimethylallyl)adenosine (ms(2)i(6)A) at position 37 in tRNAs that read codons beginning with uridine.</text>
</comment>
<comment type="catalytic activity">
    <reaction evidence="1">
        <text>N(6)-dimethylallyladenosine(37) in tRNA + (sulfur carrier)-SH + AH2 + 2 S-adenosyl-L-methionine = 2-methylsulfanyl-N(6)-dimethylallyladenosine(37) in tRNA + (sulfur carrier)-H + 5'-deoxyadenosine + L-methionine + A + S-adenosyl-L-homocysteine + 2 H(+)</text>
        <dbReference type="Rhea" id="RHEA:37067"/>
        <dbReference type="Rhea" id="RHEA-COMP:10375"/>
        <dbReference type="Rhea" id="RHEA-COMP:10376"/>
        <dbReference type="Rhea" id="RHEA-COMP:14737"/>
        <dbReference type="Rhea" id="RHEA-COMP:14739"/>
        <dbReference type="ChEBI" id="CHEBI:13193"/>
        <dbReference type="ChEBI" id="CHEBI:15378"/>
        <dbReference type="ChEBI" id="CHEBI:17319"/>
        <dbReference type="ChEBI" id="CHEBI:17499"/>
        <dbReference type="ChEBI" id="CHEBI:29917"/>
        <dbReference type="ChEBI" id="CHEBI:57844"/>
        <dbReference type="ChEBI" id="CHEBI:57856"/>
        <dbReference type="ChEBI" id="CHEBI:59789"/>
        <dbReference type="ChEBI" id="CHEBI:64428"/>
        <dbReference type="ChEBI" id="CHEBI:74415"/>
        <dbReference type="ChEBI" id="CHEBI:74417"/>
        <dbReference type="EC" id="2.8.4.3"/>
    </reaction>
</comment>
<comment type="cofactor">
    <cofactor evidence="1">
        <name>[4Fe-4S] cluster</name>
        <dbReference type="ChEBI" id="CHEBI:49883"/>
    </cofactor>
    <text evidence="1">Binds 2 [4Fe-4S] clusters. One cluster is coordinated with 3 cysteines and an exchangeable S-adenosyl-L-methionine.</text>
</comment>
<comment type="subunit">
    <text evidence="1">Monomer.</text>
</comment>
<comment type="subcellular location">
    <subcellularLocation>
        <location evidence="1">Cytoplasm</location>
    </subcellularLocation>
</comment>
<comment type="similarity">
    <text evidence="1">Belongs to the methylthiotransferase family. MiaB subfamily.</text>
</comment>
<evidence type="ECO:0000255" key="1">
    <source>
        <dbReference type="HAMAP-Rule" id="MF_01864"/>
    </source>
</evidence>
<evidence type="ECO:0000255" key="2">
    <source>
        <dbReference type="PROSITE-ProRule" id="PRU01266"/>
    </source>
</evidence>
<proteinExistence type="inferred from homology"/>
<reference key="1">
    <citation type="journal article" date="2005" name="J. Bacteriol.">
        <title>Whole-genome sequence analysis of Pseudomonas syringae pv. phaseolicola 1448A reveals divergence among pathovars in genes involved in virulence and transposition.</title>
        <authorList>
            <person name="Joardar V."/>
            <person name="Lindeberg M."/>
            <person name="Jackson R.W."/>
            <person name="Selengut J."/>
            <person name="Dodson R."/>
            <person name="Brinkac L.M."/>
            <person name="Daugherty S.C."/>
            <person name="DeBoy R.T."/>
            <person name="Durkin A.S."/>
            <person name="Gwinn Giglio M."/>
            <person name="Madupu R."/>
            <person name="Nelson W.C."/>
            <person name="Rosovitz M.J."/>
            <person name="Sullivan S.A."/>
            <person name="Crabtree J."/>
            <person name="Creasy T."/>
            <person name="Davidsen T.M."/>
            <person name="Haft D.H."/>
            <person name="Zafar N."/>
            <person name="Zhou L."/>
            <person name="Halpin R."/>
            <person name="Holley T."/>
            <person name="Khouri H.M."/>
            <person name="Feldblyum T.V."/>
            <person name="White O."/>
            <person name="Fraser C.M."/>
            <person name="Chatterjee A.K."/>
            <person name="Cartinhour S."/>
            <person name="Schneider D."/>
            <person name="Mansfield J.W."/>
            <person name="Collmer A."/>
            <person name="Buell R."/>
        </authorList>
    </citation>
    <scope>NUCLEOTIDE SEQUENCE [LARGE SCALE GENOMIC DNA]</scope>
    <source>
        <strain>1448A / Race 6</strain>
    </source>
</reference>
<organism>
    <name type="scientific">Pseudomonas savastanoi pv. phaseolicola (strain 1448A / Race 6)</name>
    <name type="common">Pseudomonas syringae pv. phaseolicola (strain 1448A / Race 6)</name>
    <dbReference type="NCBI Taxonomy" id="264730"/>
    <lineage>
        <taxon>Bacteria</taxon>
        <taxon>Pseudomonadati</taxon>
        <taxon>Pseudomonadota</taxon>
        <taxon>Gammaproteobacteria</taxon>
        <taxon>Pseudomonadales</taxon>
        <taxon>Pseudomonadaceae</taxon>
        <taxon>Pseudomonas</taxon>
    </lineage>
</organism>
<gene>
    <name evidence="1" type="primary">miaB</name>
    <name type="ordered locus">PSPPH_4387</name>
</gene>
<feature type="chain" id="PRO_0000374468" description="tRNA-2-methylthio-N(6)-dimethylallyladenosine synthase">
    <location>
        <begin position="1"/>
        <end position="442"/>
    </location>
</feature>
<feature type="domain" description="MTTase N-terminal" evidence="1">
    <location>
        <begin position="3"/>
        <end position="120"/>
    </location>
</feature>
<feature type="domain" description="Radical SAM core" evidence="2">
    <location>
        <begin position="143"/>
        <end position="375"/>
    </location>
</feature>
<feature type="domain" description="TRAM" evidence="1">
    <location>
        <begin position="378"/>
        <end position="442"/>
    </location>
</feature>
<feature type="binding site" evidence="1">
    <location>
        <position position="12"/>
    </location>
    <ligand>
        <name>[4Fe-4S] cluster</name>
        <dbReference type="ChEBI" id="CHEBI:49883"/>
        <label>1</label>
    </ligand>
</feature>
<feature type="binding site" evidence="1">
    <location>
        <position position="49"/>
    </location>
    <ligand>
        <name>[4Fe-4S] cluster</name>
        <dbReference type="ChEBI" id="CHEBI:49883"/>
        <label>1</label>
    </ligand>
</feature>
<feature type="binding site" evidence="1">
    <location>
        <position position="83"/>
    </location>
    <ligand>
        <name>[4Fe-4S] cluster</name>
        <dbReference type="ChEBI" id="CHEBI:49883"/>
        <label>1</label>
    </ligand>
</feature>
<feature type="binding site" evidence="1">
    <location>
        <position position="157"/>
    </location>
    <ligand>
        <name>[4Fe-4S] cluster</name>
        <dbReference type="ChEBI" id="CHEBI:49883"/>
        <label>2</label>
        <note>4Fe-4S-S-AdoMet</note>
    </ligand>
</feature>
<feature type="binding site" evidence="1">
    <location>
        <position position="161"/>
    </location>
    <ligand>
        <name>[4Fe-4S] cluster</name>
        <dbReference type="ChEBI" id="CHEBI:49883"/>
        <label>2</label>
        <note>4Fe-4S-S-AdoMet</note>
    </ligand>
</feature>
<feature type="binding site" evidence="1">
    <location>
        <position position="164"/>
    </location>
    <ligand>
        <name>[4Fe-4S] cluster</name>
        <dbReference type="ChEBI" id="CHEBI:49883"/>
        <label>2</label>
        <note>4Fe-4S-S-AdoMet</note>
    </ligand>
</feature>
<accession>Q48DN8</accession>
<sequence>MAKKLYIETHGCQMNEYDSSRMVDLLGEHQALEVTARAEDADVILLNTCSIRERAQDRVYSQLGRWRELKLANPEMVIAVGGCVASQEGAAIRDRAPYVDVVFGPQTLHRLPEMIDAARITRLPQVDVSFPEIEKFDHLPEPRVDGPSAYVSVMEGCSKYCTFCVVPYTRGEEVSRPFDDVLSEVIHLAENGVREVTLLGQNVNGYRGTTHDGRVADLADLIRVVAAVDGIDRIRYTTSHPLEFSDSLIQAHAEVPELVKHLHLPVQSGSDRILAAMKRNHTTLEYKSRLRKLRAAVPGISISSDFIVGFPGETEKDFDNTMKLIEDVGFDFSFSFVYSPRPGTPAADLKDDTPEALKKERLAALQHRLNQQGFEISRQMVGSIQRILVTDYSKKDPGELQGRTENNRIVNFRCNNPKLIGQFADVHIDDAQPHSLRGSLLQ</sequence>